<dbReference type="EMBL" id="CR931997">
    <property type="protein sequence ID" value="CAI37667.1"/>
    <property type="molecule type" value="Genomic_DNA"/>
</dbReference>
<dbReference type="RefSeq" id="WP_011273918.1">
    <property type="nucleotide sequence ID" value="NC_007164.1"/>
</dbReference>
<dbReference type="SMR" id="Q4JU40"/>
<dbReference type="STRING" id="306537.jk1494"/>
<dbReference type="KEGG" id="cjk:jk1494"/>
<dbReference type="PATRIC" id="fig|306537.10.peg.1514"/>
<dbReference type="eggNOG" id="COG1825">
    <property type="taxonomic scope" value="Bacteria"/>
</dbReference>
<dbReference type="HOGENOM" id="CLU_075939_1_0_11"/>
<dbReference type="OrthoDB" id="5242980at2"/>
<dbReference type="Proteomes" id="UP000000545">
    <property type="component" value="Chromosome"/>
</dbReference>
<dbReference type="GO" id="GO:0022625">
    <property type="term" value="C:cytosolic large ribosomal subunit"/>
    <property type="evidence" value="ECO:0007669"/>
    <property type="project" value="TreeGrafter"/>
</dbReference>
<dbReference type="GO" id="GO:0008097">
    <property type="term" value="F:5S rRNA binding"/>
    <property type="evidence" value="ECO:0007669"/>
    <property type="project" value="InterPro"/>
</dbReference>
<dbReference type="GO" id="GO:0003735">
    <property type="term" value="F:structural constituent of ribosome"/>
    <property type="evidence" value="ECO:0007669"/>
    <property type="project" value="InterPro"/>
</dbReference>
<dbReference type="GO" id="GO:0006412">
    <property type="term" value="P:translation"/>
    <property type="evidence" value="ECO:0007669"/>
    <property type="project" value="UniProtKB-UniRule"/>
</dbReference>
<dbReference type="CDD" id="cd00495">
    <property type="entry name" value="Ribosomal_L25_TL5_CTC"/>
    <property type="match status" value="1"/>
</dbReference>
<dbReference type="Gene3D" id="2.170.120.20">
    <property type="entry name" value="Ribosomal protein L25, beta domain"/>
    <property type="match status" value="1"/>
</dbReference>
<dbReference type="Gene3D" id="2.40.240.10">
    <property type="entry name" value="Ribosomal Protein L25, Chain P"/>
    <property type="match status" value="1"/>
</dbReference>
<dbReference type="HAMAP" id="MF_01334">
    <property type="entry name" value="Ribosomal_bL25_CTC"/>
    <property type="match status" value="1"/>
</dbReference>
<dbReference type="InterPro" id="IPR020056">
    <property type="entry name" value="Rbsml_bL25/Gln-tRNA_synth_N"/>
</dbReference>
<dbReference type="InterPro" id="IPR011035">
    <property type="entry name" value="Ribosomal_bL25/Gln-tRNA_synth"/>
</dbReference>
<dbReference type="InterPro" id="IPR020057">
    <property type="entry name" value="Ribosomal_bL25_b-dom"/>
</dbReference>
<dbReference type="InterPro" id="IPR037121">
    <property type="entry name" value="Ribosomal_bL25_C"/>
</dbReference>
<dbReference type="InterPro" id="IPR001021">
    <property type="entry name" value="Ribosomal_bL25_long"/>
</dbReference>
<dbReference type="InterPro" id="IPR029751">
    <property type="entry name" value="Ribosomal_L25_dom"/>
</dbReference>
<dbReference type="InterPro" id="IPR020930">
    <property type="entry name" value="Ribosomal_uL5_bac-type"/>
</dbReference>
<dbReference type="NCBIfam" id="TIGR00731">
    <property type="entry name" value="bL25_bact_ctc"/>
    <property type="match status" value="1"/>
</dbReference>
<dbReference type="NCBIfam" id="NF004131">
    <property type="entry name" value="PRK05618.2-1"/>
    <property type="match status" value="1"/>
</dbReference>
<dbReference type="PANTHER" id="PTHR33284">
    <property type="entry name" value="RIBOSOMAL PROTEIN L25/GLN-TRNA SYNTHETASE, ANTI-CODON-BINDING DOMAIN-CONTAINING PROTEIN"/>
    <property type="match status" value="1"/>
</dbReference>
<dbReference type="PANTHER" id="PTHR33284:SF1">
    <property type="entry name" value="RIBOSOMAL PROTEIN L25_GLN-TRNA SYNTHETASE, ANTI-CODON-BINDING DOMAIN-CONTAINING PROTEIN"/>
    <property type="match status" value="1"/>
</dbReference>
<dbReference type="Pfam" id="PF01386">
    <property type="entry name" value="Ribosomal_L25p"/>
    <property type="match status" value="1"/>
</dbReference>
<dbReference type="Pfam" id="PF14693">
    <property type="entry name" value="Ribosomal_TL5_C"/>
    <property type="match status" value="1"/>
</dbReference>
<dbReference type="SUPFAM" id="SSF50715">
    <property type="entry name" value="Ribosomal protein L25-like"/>
    <property type="match status" value="1"/>
</dbReference>
<proteinExistence type="inferred from homology"/>
<accession>Q4JU40</accession>
<gene>
    <name evidence="1" type="primary">rplY</name>
    <name evidence="1" type="synonym">ctc</name>
    <name type="ordered locus">jk1494</name>
</gene>
<reference key="1">
    <citation type="journal article" date="2005" name="J. Bacteriol.">
        <title>Complete genome sequence and analysis of the multiresistant nosocomial pathogen Corynebacterium jeikeium K411, a lipid-requiring bacterium of the human skin flora.</title>
        <authorList>
            <person name="Tauch A."/>
            <person name="Kaiser O."/>
            <person name="Hain T."/>
            <person name="Goesmann A."/>
            <person name="Weisshaar B."/>
            <person name="Albersmeier A."/>
            <person name="Bekel T."/>
            <person name="Bischoff N."/>
            <person name="Brune I."/>
            <person name="Chakraborty T."/>
            <person name="Kalinowski J."/>
            <person name="Meyer F."/>
            <person name="Rupp O."/>
            <person name="Schneiker S."/>
            <person name="Viehoever P."/>
            <person name="Puehler A."/>
        </authorList>
    </citation>
    <scope>NUCLEOTIDE SEQUENCE [LARGE SCALE GENOMIC DNA]</scope>
    <source>
        <strain>K411</strain>
    </source>
</reference>
<protein>
    <recommendedName>
        <fullName evidence="1">Large ribosomal subunit protein bL25</fullName>
    </recommendedName>
    <alternativeName>
        <fullName evidence="3">50S ribosomal protein L25</fullName>
    </alternativeName>
    <alternativeName>
        <fullName evidence="1">General stress protein CTC</fullName>
    </alternativeName>
</protein>
<feature type="chain" id="PRO_0000244204" description="Large ribosomal subunit protein bL25">
    <location>
        <begin position="1"/>
        <end position="214"/>
    </location>
</feature>
<feature type="region of interest" description="Disordered" evidence="2">
    <location>
        <begin position="178"/>
        <end position="214"/>
    </location>
</feature>
<feature type="compositionally biased region" description="Acidic residues" evidence="2">
    <location>
        <begin position="179"/>
        <end position="214"/>
    </location>
</feature>
<organism>
    <name type="scientific">Corynebacterium jeikeium (strain K411)</name>
    <dbReference type="NCBI Taxonomy" id="306537"/>
    <lineage>
        <taxon>Bacteria</taxon>
        <taxon>Bacillati</taxon>
        <taxon>Actinomycetota</taxon>
        <taxon>Actinomycetes</taxon>
        <taxon>Mycobacteriales</taxon>
        <taxon>Corynebacteriaceae</taxon>
        <taxon>Corynebacterium</taxon>
    </lineage>
</organism>
<comment type="function">
    <text evidence="1">This is one of the proteins that binds to the 5S RNA in the ribosome where it forms part of the central protuberance.</text>
</comment>
<comment type="subunit">
    <text evidence="1">Part of the 50S ribosomal subunit; part of the 5S rRNA/L5/L18/L25 subcomplex. Contacts the 5S rRNA. Binds to the 5S rRNA independently of L5 and L18.</text>
</comment>
<comment type="similarity">
    <text evidence="1">Belongs to the bacterial ribosomal protein bL25 family. CTC subfamily.</text>
</comment>
<evidence type="ECO:0000255" key="1">
    <source>
        <dbReference type="HAMAP-Rule" id="MF_01334"/>
    </source>
</evidence>
<evidence type="ECO:0000256" key="2">
    <source>
        <dbReference type="SAM" id="MobiDB-lite"/>
    </source>
</evidence>
<evidence type="ECO:0000305" key="3"/>
<name>RL25_CORJK</name>
<keyword id="KW-1185">Reference proteome</keyword>
<keyword id="KW-0687">Ribonucleoprotein</keyword>
<keyword id="KW-0689">Ribosomal protein</keyword>
<keyword id="KW-0694">RNA-binding</keyword>
<keyword id="KW-0699">rRNA-binding</keyword>
<sequence>MADITRLKGELRTEFGKGASRRLRRDFRVPAVVYGNDLDPMHVHVDILEFQAILRNEGVNAVLELEIEGQDHLVMIKAVDQNVLTLDVDHADLLNVKRGEKVEVDVPVIFTGQAAPGALVTQEADVITILADVLNIPEEITVDVEGKEIGDQVLAGDLQMPGNASLVSEEDTLIINVVEPEEEELPETDEEGEGAEGEAAEAAEGESAEGESEE</sequence>